<organism>
    <name type="scientific">Mus musculus</name>
    <name type="common">Mouse</name>
    <dbReference type="NCBI Taxonomy" id="10090"/>
    <lineage>
        <taxon>Eukaryota</taxon>
        <taxon>Metazoa</taxon>
        <taxon>Chordata</taxon>
        <taxon>Craniata</taxon>
        <taxon>Vertebrata</taxon>
        <taxon>Euteleostomi</taxon>
        <taxon>Mammalia</taxon>
        <taxon>Eutheria</taxon>
        <taxon>Euarchontoglires</taxon>
        <taxon>Glires</taxon>
        <taxon>Rodentia</taxon>
        <taxon>Myomorpha</taxon>
        <taxon>Muroidea</taxon>
        <taxon>Muridae</taxon>
        <taxon>Murinae</taxon>
        <taxon>Mus</taxon>
        <taxon>Mus</taxon>
    </lineage>
</organism>
<sequence length="365" mass="40678">MEPGQPREAREPGPGAETAAVPRWEEAKTFYDNLSSKKKPKSPKPQNAVTIAVSSRALFRMDEEQRIYTEQGVEEYVRYQLEHENEPFSPGPAFPFVKALEAVNKRLRELYPDSEDIFDIVLMTNNHAQVGVRLINSINHYDLFIERFCMTGGNSPICYLKAYHTNLYLSADADKVREAIDEGIAAATIFSPSRDVVVSQSQLRVAFDGDAVLFSDESERIVKAHGLDRFFEHEKAHENKPLAQGPLKGFLEALGRLQKKFYSKGLRLECPIRTYLVTARSAASSGARALKTLRSWGLETDEALFLAGAPKGPLLEKIRPHIFFDDQMFHVAGAQEMGTVAAHVPYGVAQNPRRAAAAKQSLGAQ</sequence>
<name>5NT1A_MOUSE</name>
<keyword id="KW-0963">Cytoplasm</keyword>
<keyword id="KW-0378">Hydrolase</keyword>
<keyword id="KW-0460">Magnesium</keyword>
<keyword id="KW-0546">Nucleotide metabolism</keyword>
<keyword id="KW-0547">Nucleotide-binding</keyword>
<keyword id="KW-1185">Reference proteome</keyword>
<dbReference type="EC" id="3.1.3.5" evidence="2"/>
<dbReference type="EC" id="3.1.3.89" evidence="2"/>
<dbReference type="EC" id="3.1.3.99" evidence="2"/>
<dbReference type="EMBL" id="AL606934">
    <property type="status" value="NOT_ANNOTATED_CDS"/>
    <property type="molecule type" value="Genomic_DNA"/>
</dbReference>
<dbReference type="EMBL" id="CH466552">
    <property type="protein sequence ID" value="EDL30387.1"/>
    <property type="molecule type" value="Genomic_DNA"/>
</dbReference>
<dbReference type="EMBL" id="BC147308">
    <property type="protein sequence ID" value="AAI47309.1"/>
    <property type="molecule type" value="mRNA"/>
</dbReference>
<dbReference type="EMBL" id="BC147309">
    <property type="protein sequence ID" value="AAI47310.1"/>
    <property type="molecule type" value="mRNA"/>
</dbReference>
<dbReference type="EMBL" id="BC147730">
    <property type="protein sequence ID" value="AAI47731.1"/>
    <property type="molecule type" value="mRNA"/>
</dbReference>
<dbReference type="EMBL" id="BC147733">
    <property type="protein sequence ID" value="AAI47734.1"/>
    <property type="molecule type" value="mRNA"/>
</dbReference>
<dbReference type="CCDS" id="CCDS38871.1"/>
<dbReference type="RefSeq" id="NP_001078971.1">
    <property type="nucleotide sequence ID" value="NM_001085502.2"/>
</dbReference>
<dbReference type="FunCoup" id="A3KFX0">
    <property type="interactions" value="506"/>
</dbReference>
<dbReference type="STRING" id="10090.ENSMUSP00000069422"/>
<dbReference type="iPTMnet" id="A3KFX0"/>
<dbReference type="PhosphoSitePlus" id="A3KFX0"/>
<dbReference type="PaxDb" id="10090-ENSMUSP00000069422"/>
<dbReference type="PeptideAtlas" id="A3KFX0"/>
<dbReference type="ProteomicsDB" id="296420"/>
<dbReference type="Antibodypedia" id="54865">
    <property type="antibodies" value="192 antibodies from 26 providers"/>
</dbReference>
<dbReference type="Ensembl" id="ENSMUST00000068262.6">
    <property type="protein sequence ID" value="ENSMUSP00000069422.6"/>
    <property type="gene ID" value="ENSMUSG00000054958.7"/>
</dbReference>
<dbReference type="GeneID" id="230718"/>
<dbReference type="KEGG" id="mmu:230718"/>
<dbReference type="UCSC" id="uc008uoy.1">
    <property type="organism name" value="mouse"/>
</dbReference>
<dbReference type="AGR" id="MGI:2155700"/>
<dbReference type="CTD" id="84618"/>
<dbReference type="MGI" id="MGI:2155700">
    <property type="gene designation" value="Nt5c1a"/>
</dbReference>
<dbReference type="VEuPathDB" id="HostDB:ENSMUSG00000054958"/>
<dbReference type="eggNOG" id="ENOG502QRJF">
    <property type="taxonomic scope" value="Eukaryota"/>
</dbReference>
<dbReference type="GeneTree" id="ENSGT00390000017767"/>
<dbReference type="HOGENOM" id="CLU_060123_0_0_1"/>
<dbReference type="InParanoid" id="A3KFX0"/>
<dbReference type="OMA" id="YQIEHED"/>
<dbReference type="OrthoDB" id="9994138at2759"/>
<dbReference type="PhylomeDB" id="A3KFX0"/>
<dbReference type="TreeFam" id="TF329831"/>
<dbReference type="Reactome" id="R-MMU-73621">
    <property type="pathway name" value="Pyrimidine catabolism"/>
</dbReference>
<dbReference type="Reactome" id="R-MMU-74259">
    <property type="pathway name" value="Purine catabolism"/>
</dbReference>
<dbReference type="BioGRID-ORCS" id="230718">
    <property type="hits" value="1 hit in 77 CRISPR screens"/>
</dbReference>
<dbReference type="PRO" id="PR:A3KFX0"/>
<dbReference type="Proteomes" id="UP000000589">
    <property type="component" value="Chromosome 4"/>
</dbReference>
<dbReference type="RNAct" id="A3KFX0">
    <property type="molecule type" value="protein"/>
</dbReference>
<dbReference type="Bgee" id="ENSMUSG00000054958">
    <property type="expression patterns" value="Expressed in hindlimb stylopod muscle and 30 other cell types or tissues"/>
</dbReference>
<dbReference type="GO" id="GO:0005829">
    <property type="term" value="C:cytosol"/>
    <property type="evidence" value="ECO:0000266"/>
    <property type="project" value="MGI"/>
</dbReference>
<dbReference type="GO" id="GO:0002953">
    <property type="term" value="F:5'-deoxynucleotidase activity"/>
    <property type="evidence" value="ECO:0007669"/>
    <property type="project" value="RHEA"/>
</dbReference>
<dbReference type="GO" id="GO:0008253">
    <property type="term" value="F:5'-nucleotidase activity"/>
    <property type="evidence" value="ECO:0000250"/>
    <property type="project" value="UniProtKB"/>
</dbReference>
<dbReference type="GO" id="GO:0050483">
    <property type="term" value="F:IMP 5'-nucleotidase activity"/>
    <property type="evidence" value="ECO:0000266"/>
    <property type="project" value="MGI"/>
</dbReference>
<dbReference type="GO" id="GO:0000287">
    <property type="term" value="F:magnesium ion binding"/>
    <property type="evidence" value="ECO:0007669"/>
    <property type="project" value="Ensembl"/>
</dbReference>
<dbReference type="GO" id="GO:0000166">
    <property type="term" value="F:nucleotide binding"/>
    <property type="evidence" value="ECO:0007669"/>
    <property type="project" value="UniProtKB-KW"/>
</dbReference>
<dbReference type="GO" id="GO:0000255">
    <property type="term" value="P:allantoin metabolic process"/>
    <property type="evidence" value="ECO:0000266"/>
    <property type="project" value="MGI"/>
</dbReference>
<dbReference type="GO" id="GO:0043605">
    <property type="term" value="P:amide catabolic process"/>
    <property type="evidence" value="ECO:0000266"/>
    <property type="project" value="MGI"/>
</dbReference>
<dbReference type="GO" id="GO:0006196">
    <property type="term" value="P:AMP catabolic process"/>
    <property type="evidence" value="ECO:0000266"/>
    <property type="project" value="MGI"/>
</dbReference>
<dbReference type="GO" id="GO:0046059">
    <property type="term" value="P:dAMP catabolic process"/>
    <property type="evidence" value="ECO:0000266"/>
    <property type="project" value="MGI"/>
</dbReference>
<dbReference type="GO" id="GO:0046055">
    <property type="term" value="P:dGMP catabolic process"/>
    <property type="evidence" value="ECO:0000266"/>
    <property type="project" value="MGI"/>
</dbReference>
<dbReference type="GO" id="GO:0006204">
    <property type="term" value="P:IMP catabolic process"/>
    <property type="evidence" value="ECO:0000266"/>
    <property type="project" value="MGI"/>
</dbReference>
<dbReference type="GO" id="GO:0009128">
    <property type="term" value="P:purine nucleoside monophosphate catabolic process"/>
    <property type="evidence" value="ECO:0000315"/>
    <property type="project" value="MGI"/>
</dbReference>
<dbReference type="InterPro" id="IPR010394">
    <property type="entry name" value="5-nucleotidase"/>
</dbReference>
<dbReference type="PANTHER" id="PTHR31367">
    <property type="entry name" value="CYTOSOLIC 5'-NUCLEOTIDASE 1 FAMILY MEMBER"/>
    <property type="match status" value="1"/>
</dbReference>
<dbReference type="PANTHER" id="PTHR31367:SF2">
    <property type="entry name" value="CYTOSOLIC 5'-NUCLEOTIDASE 1A"/>
    <property type="match status" value="1"/>
</dbReference>
<dbReference type="Pfam" id="PF06189">
    <property type="entry name" value="5-nucleotidase"/>
    <property type="match status" value="1"/>
</dbReference>
<gene>
    <name type="primary">Nt5c1a</name>
</gene>
<reference key="1">
    <citation type="journal article" date="2009" name="PLoS Biol.">
        <title>Lineage-specific biology revealed by a finished genome assembly of the mouse.</title>
        <authorList>
            <person name="Church D.M."/>
            <person name="Goodstadt L."/>
            <person name="Hillier L.W."/>
            <person name="Zody M.C."/>
            <person name="Goldstein S."/>
            <person name="She X."/>
            <person name="Bult C.J."/>
            <person name="Agarwala R."/>
            <person name="Cherry J.L."/>
            <person name="DiCuccio M."/>
            <person name="Hlavina W."/>
            <person name="Kapustin Y."/>
            <person name="Meric P."/>
            <person name="Maglott D."/>
            <person name="Birtle Z."/>
            <person name="Marques A.C."/>
            <person name="Graves T."/>
            <person name="Zhou S."/>
            <person name="Teague B."/>
            <person name="Potamousis K."/>
            <person name="Churas C."/>
            <person name="Place M."/>
            <person name="Herschleb J."/>
            <person name="Runnheim R."/>
            <person name="Forrest D."/>
            <person name="Amos-Landgraf J."/>
            <person name="Schwartz D.C."/>
            <person name="Cheng Z."/>
            <person name="Lindblad-Toh K."/>
            <person name="Eichler E.E."/>
            <person name="Ponting C.P."/>
        </authorList>
    </citation>
    <scope>NUCLEOTIDE SEQUENCE [LARGE SCALE GENOMIC DNA]</scope>
    <source>
        <strain>C57BL/6J</strain>
    </source>
</reference>
<reference key="2">
    <citation type="submission" date="2005-09" db="EMBL/GenBank/DDBJ databases">
        <authorList>
            <person name="Mural R.J."/>
            <person name="Adams M.D."/>
            <person name="Myers E.W."/>
            <person name="Smith H.O."/>
            <person name="Venter J.C."/>
        </authorList>
    </citation>
    <scope>NUCLEOTIDE SEQUENCE [LARGE SCALE GENOMIC DNA]</scope>
</reference>
<reference key="3">
    <citation type="journal article" date="2004" name="Genome Res.">
        <title>The status, quality, and expansion of the NIH full-length cDNA project: the Mammalian Gene Collection (MGC).</title>
        <authorList>
            <consortium name="The MGC Project Team"/>
        </authorList>
    </citation>
    <scope>NUCLEOTIDE SEQUENCE [LARGE SCALE MRNA]</scope>
    <source>
        <tissue>Brain</tissue>
    </source>
</reference>
<reference key="4">
    <citation type="journal article" date="2010" name="Cell">
        <title>A tissue-specific atlas of mouse protein phosphorylation and expression.</title>
        <authorList>
            <person name="Huttlin E.L."/>
            <person name="Jedrychowski M.P."/>
            <person name="Elias J.E."/>
            <person name="Goswami T."/>
            <person name="Rad R."/>
            <person name="Beausoleil S.A."/>
            <person name="Villen J."/>
            <person name="Haas W."/>
            <person name="Sowa M.E."/>
            <person name="Gygi S.P."/>
        </authorList>
    </citation>
    <scope>IDENTIFICATION BY MASS SPECTROMETRY [LARGE SCALE ANALYSIS]</scope>
    <source>
        <tissue>Heart</tissue>
    </source>
</reference>
<feature type="chain" id="PRO_0000304930" description="Cytosolic 5'-nucleotidase 1A">
    <location>
        <begin position="1"/>
        <end position="365"/>
    </location>
</feature>
<feature type="region of interest" description="Disordered" evidence="3">
    <location>
        <begin position="1"/>
        <end position="23"/>
    </location>
</feature>
<feature type="compositionally biased region" description="Basic and acidic residues" evidence="3">
    <location>
        <begin position="1"/>
        <end position="11"/>
    </location>
</feature>
<feature type="active site" description="Nucleophile" evidence="1">
    <location>
        <position position="208"/>
    </location>
</feature>
<accession>A3KFX0</accession>
<accession>B2RVQ9</accession>
<comment type="function">
    <text evidence="2">Catalyzes the hydrolysis of ribonucleotide and deoxyribonucleotide monophosphates, releasing inorganic phosphate and the corresponding nucleoside (By similarity). AMP is the major substrate but can also hydrolyze dCMP and IMP (By similarity).</text>
</comment>
<comment type="catalytic activity">
    <reaction evidence="2">
        <text>a ribonucleoside 5'-phosphate + H2O = a ribonucleoside + phosphate</text>
        <dbReference type="Rhea" id="RHEA:12484"/>
        <dbReference type="ChEBI" id="CHEBI:15377"/>
        <dbReference type="ChEBI" id="CHEBI:18254"/>
        <dbReference type="ChEBI" id="CHEBI:43474"/>
        <dbReference type="ChEBI" id="CHEBI:58043"/>
        <dbReference type="EC" id="3.1.3.5"/>
    </reaction>
</comment>
<comment type="catalytic activity">
    <reaction evidence="2">
        <text>a 2'-deoxyribonucleoside 5'-phosphate + H2O = a 2'-deoxyribonucleoside + phosphate</text>
        <dbReference type="Rhea" id="RHEA:36167"/>
        <dbReference type="ChEBI" id="CHEBI:15377"/>
        <dbReference type="ChEBI" id="CHEBI:18274"/>
        <dbReference type="ChEBI" id="CHEBI:43474"/>
        <dbReference type="ChEBI" id="CHEBI:65317"/>
        <dbReference type="EC" id="3.1.3.89"/>
    </reaction>
</comment>
<comment type="catalytic activity">
    <reaction evidence="2">
        <text>IMP + H2O = inosine + phosphate</text>
        <dbReference type="Rhea" id="RHEA:27718"/>
        <dbReference type="ChEBI" id="CHEBI:15377"/>
        <dbReference type="ChEBI" id="CHEBI:17596"/>
        <dbReference type="ChEBI" id="CHEBI:43474"/>
        <dbReference type="ChEBI" id="CHEBI:58053"/>
        <dbReference type="EC" id="3.1.3.99"/>
    </reaction>
</comment>
<comment type="catalytic activity">
    <reaction evidence="2">
        <text>AMP + H2O = adenosine + phosphate</text>
        <dbReference type="Rhea" id="RHEA:29375"/>
        <dbReference type="ChEBI" id="CHEBI:15377"/>
        <dbReference type="ChEBI" id="CHEBI:16335"/>
        <dbReference type="ChEBI" id="CHEBI:43474"/>
        <dbReference type="ChEBI" id="CHEBI:456215"/>
    </reaction>
</comment>
<comment type="catalytic activity">
    <reaction evidence="2">
        <text>dCMP + H2O = 2'-deoxycytidine + phosphate</text>
        <dbReference type="Rhea" id="RHEA:29363"/>
        <dbReference type="ChEBI" id="CHEBI:15377"/>
        <dbReference type="ChEBI" id="CHEBI:15698"/>
        <dbReference type="ChEBI" id="CHEBI:43474"/>
        <dbReference type="ChEBI" id="CHEBI:57566"/>
    </reaction>
</comment>
<comment type="cofactor">
    <cofactor evidence="2">
        <name>Mg(2+)</name>
        <dbReference type="ChEBI" id="CHEBI:18420"/>
    </cofactor>
</comment>
<comment type="activity regulation">
    <text evidence="2">Activated by ADP.</text>
</comment>
<comment type="subcellular location">
    <subcellularLocation>
        <location evidence="2">Cytoplasm</location>
    </subcellularLocation>
</comment>
<comment type="similarity">
    <text evidence="4">Belongs to the 5'-nucleotidase type 3 family.</text>
</comment>
<evidence type="ECO:0000250" key="1"/>
<evidence type="ECO:0000250" key="2">
    <source>
        <dbReference type="UniProtKB" id="Q9BXI3"/>
    </source>
</evidence>
<evidence type="ECO:0000256" key="3">
    <source>
        <dbReference type="SAM" id="MobiDB-lite"/>
    </source>
</evidence>
<evidence type="ECO:0000305" key="4"/>
<proteinExistence type="evidence at protein level"/>
<protein>
    <recommendedName>
        <fullName>Cytosolic 5'-nucleotidase 1A</fullName>
        <shortName>cN1A</shortName>
        <ecNumber evidence="2">3.1.3.5</ecNumber>
        <ecNumber evidence="2">3.1.3.89</ecNumber>
        <ecNumber evidence="2">3.1.3.99</ecNumber>
    </recommendedName>
    <alternativeName>
        <fullName evidence="2">5'-deoxynucleotidase</fullName>
    </alternativeName>
    <alternativeName>
        <fullName>Cytosolic 5'-nucleotidase IA</fullName>
        <shortName>cN-IA</shortName>
    </alternativeName>
</protein>